<feature type="chain" id="PRO_0000086299" description="Serine/threonine-protein kinase MARK1">
    <location>
        <begin position="1"/>
        <end position="795"/>
    </location>
</feature>
<feature type="domain" description="Protein kinase" evidence="6">
    <location>
        <begin position="60"/>
        <end position="311"/>
    </location>
</feature>
<feature type="domain" description="UBA" evidence="7">
    <location>
        <begin position="329"/>
        <end position="370"/>
    </location>
</feature>
<feature type="domain" description="KA1" evidence="8">
    <location>
        <begin position="746"/>
        <end position="795"/>
    </location>
</feature>
<feature type="region of interest" description="Disordered" evidence="10">
    <location>
        <begin position="1"/>
        <end position="41"/>
    </location>
</feature>
<feature type="region of interest" description="Disordered" evidence="10">
    <location>
        <begin position="377"/>
        <end position="498"/>
    </location>
</feature>
<feature type="region of interest" description="Disordered" evidence="10">
    <location>
        <begin position="518"/>
        <end position="699"/>
    </location>
</feature>
<feature type="compositionally biased region" description="Polar residues" evidence="10">
    <location>
        <begin position="387"/>
        <end position="403"/>
    </location>
</feature>
<feature type="compositionally biased region" description="Basic and acidic residues" evidence="10">
    <location>
        <begin position="447"/>
        <end position="459"/>
    </location>
</feature>
<feature type="compositionally biased region" description="Polar residues" evidence="10">
    <location>
        <begin position="462"/>
        <end position="473"/>
    </location>
</feature>
<feature type="compositionally biased region" description="Polar residues" evidence="10">
    <location>
        <begin position="486"/>
        <end position="495"/>
    </location>
</feature>
<feature type="compositionally biased region" description="Low complexity" evidence="10">
    <location>
        <begin position="523"/>
        <end position="547"/>
    </location>
</feature>
<feature type="compositionally biased region" description="Low complexity" evidence="10">
    <location>
        <begin position="585"/>
        <end position="599"/>
    </location>
</feature>
<feature type="compositionally biased region" description="Polar residues" evidence="10">
    <location>
        <begin position="647"/>
        <end position="657"/>
    </location>
</feature>
<feature type="compositionally biased region" description="Basic and acidic residues" evidence="10">
    <location>
        <begin position="661"/>
        <end position="676"/>
    </location>
</feature>
<feature type="compositionally biased region" description="Basic and acidic residues" evidence="10">
    <location>
        <begin position="683"/>
        <end position="697"/>
    </location>
</feature>
<feature type="active site" description="Proton acceptor" evidence="3 6 9">
    <location>
        <position position="182"/>
    </location>
</feature>
<feature type="binding site" evidence="3 6">
    <location>
        <begin position="66"/>
        <end position="74"/>
    </location>
    <ligand>
        <name>ATP</name>
        <dbReference type="ChEBI" id="CHEBI:30616"/>
    </ligand>
</feature>
<feature type="binding site" evidence="2 6">
    <location>
        <position position="89"/>
    </location>
    <ligand>
        <name>ATP</name>
        <dbReference type="ChEBI" id="CHEBI:30616"/>
    </ligand>
</feature>
<feature type="modified residue" description="Phosphothreonine" evidence="4">
    <location>
        <position position="5"/>
    </location>
</feature>
<feature type="modified residue" description="Phosphothreonine" evidence="4">
    <location>
        <position position="208"/>
    </location>
</feature>
<feature type="modified residue" description="Phosphothreonine; by LKB1 and TAOK1" evidence="4">
    <location>
        <position position="215"/>
    </location>
</feature>
<feature type="modified residue" description="Phosphoserine; by GSK3-beta" evidence="2">
    <location>
        <position position="219"/>
    </location>
</feature>
<feature type="modified residue" description="Phosphoserine" evidence="15">
    <location>
        <position position="382"/>
    </location>
</feature>
<feature type="modified residue" description="Phosphoserine" evidence="15">
    <location>
        <position position="390"/>
    </location>
</feature>
<feature type="modified residue" description="Phosphoserine" evidence="15">
    <location>
        <position position="393"/>
    </location>
</feature>
<feature type="modified residue" description="Phosphoserine" evidence="14 15">
    <location>
        <position position="403"/>
    </location>
</feature>
<feature type="modified residue" description="Phosphoserine" evidence="15">
    <location>
        <position position="423"/>
    </location>
</feature>
<feature type="modified residue" description="Phosphoserine" evidence="2">
    <location>
        <position position="444"/>
    </location>
</feature>
<feature type="modified residue" description="Phosphoserine" evidence="15">
    <location>
        <position position="475"/>
    </location>
</feature>
<feature type="modified residue" description="Phosphoserine" evidence="4">
    <location>
        <position position="588"/>
    </location>
</feature>
<feature type="modified residue" description="Phosphothreonine; by PKC/PRKCZ" evidence="1">
    <location>
        <position position="613"/>
    </location>
</feature>
<feature type="modified residue" description="Phosphoserine" evidence="14">
    <location>
        <position position="666"/>
    </location>
</feature>
<feature type="sequence conflict" description="In Ref. 1; AAL50826." evidence="11" ref="1">
    <original>A</original>
    <variation>T</variation>
    <location>
        <position position="32"/>
    </location>
</feature>
<feature type="sequence conflict" description="In Ref. 1; AAL50826." evidence="11" ref="1">
    <original>L</original>
    <variation>I</variation>
    <location>
        <position position="40"/>
    </location>
</feature>
<feature type="sequence conflict" description="In Ref. 3; BAD32459." evidence="11" ref="3">
    <original>I</original>
    <variation>T</variation>
    <location>
        <position position="110"/>
    </location>
</feature>
<feature type="sequence conflict" description="In Ref. 1; AAL50826." evidence="11" ref="1">
    <original>I</original>
    <variation>V</variation>
    <location>
        <position position="276"/>
    </location>
</feature>
<feature type="sequence conflict" description="In Ref. 3; BAD32459." evidence="11" ref="3">
    <original>E</original>
    <variation>D</variation>
    <location>
        <position position="318"/>
    </location>
</feature>
<feature type="sequence conflict" description="In Ref. 1; AAL50826." evidence="11" ref="1">
    <original>S</original>
    <variation>N</variation>
    <location>
        <position position="331"/>
    </location>
</feature>
<feature type="sequence conflict" description="In Ref. 1; AAL50826." evidence="11" ref="1">
    <original>S</original>
    <variation>N</variation>
    <location>
        <position position="385"/>
    </location>
</feature>
<feature type="sequence conflict" description="In Ref. 1; AAL50826." evidence="11" ref="1">
    <original>G</original>
    <variation>D</variation>
    <location>
        <position position="454"/>
    </location>
</feature>
<feature type="sequence conflict" description="In Ref. 3; BAD32459." evidence="11" ref="3">
    <original>G</original>
    <variation>GS</variation>
    <location>
        <position position="579"/>
    </location>
</feature>
<feature type="sequence conflict" description="In Ref. 1; AAL50826." evidence="11" ref="1">
    <original>P</original>
    <variation>R</variation>
    <location>
        <position position="630"/>
    </location>
</feature>
<feature type="sequence conflict" description="In Ref. 1; AAL50826." evidence="11" ref="1">
    <original>F</original>
    <variation>L</variation>
    <location>
        <position position="641"/>
    </location>
</feature>
<feature type="sequence conflict" description="In Ref. 1; AAL50826." evidence="11" ref="1">
    <original>A</original>
    <variation>T</variation>
    <location>
        <position position="674"/>
    </location>
</feature>
<feature type="sequence conflict" description="In Ref. 1; AAL50826." evidence="11" ref="1">
    <original>D</original>
    <variation>E</variation>
    <location>
        <position position="683"/>
    </location>
</feature>
<feature type="sequence conflict" description="In Ref. 1; AAL50826." evidence="11" ref="1">
    <original>D</original>
    <variation>E</variation>
    <location>
        <position position="690"/>
    </location>
</feature>
<comment type="function">
    <text evidence="4">Serine/threonine-protein kinase (By similarity). Involved in cell polarity and microtubule dynamics regulation. Phosphorylates DCX, MAP2 and MAP4. Phosphorylates the microtubule-associated protein MAPT/TAU (By similarity). Involved in cell polarity by phosphorylating the microtubule-associated proteins MAP2, MAP4 and MAPT/TAU at KXGS motifs, causing detachment from microtubules, and their disassembly. Involved in the regulation of neuronal migration through its dual activities in regulating cellular polarity and microtubule dynamics, possibly by phosphorylating and regulating DCX. Also acts as a positive regulator of the Wnt signaling pathway, probably by mediating phosphorylation of dishevelled proteins (DVL1, DVL2 and/or DVL3).</text>
</comment>
<comment type="catalytic activity">
    <reaction evidence="5">
        <text>L-seryl-[protein] + ATP = O-phospho-L-seryl-[protein] + ADP + H(+)</text>
        <dbReference type="Rhea" id="RHEA:17989"/>
        <dbReference type="Rhea" id="RHEA-COMP:9863"/>
        <dbReference type="Rhea" id="RHEA-COMP:11604"/>
        <dbReference type="ChEBI" id="CHEBI:15378"/>
        <dbReference type="ChEBI" id="CHEBI:29999"/>
        <dbReference type="ChEBI" id="CHEBI:30616"/>
        <dbReference type="ChEBI" id="CHEBI:83421"/>
        <dbReference type="ChEBI" id="CHEBI:456216"/>
        <dbReference type="EC" id="2.7.11.1"/>
    </reaction>
</comment>
<comment type="catalytic activity">
    <reaction evidence="5">
        <text>L-threonyl-[protein] + ATP = O-phospho-L-threonyl-[protein] + ADP + H(+)</text>
        <dbReference type="Rhea" id="RHEA:46608"/>
        <dbReference type="Rhea" id="RHEA-COMP:11060"/>
        <dbReference type="Rhea" id="RHEA-COMP:11605"/>
        <dbReference type="ChEBI" id="CHEBI:15378"/>
        <dbReference type="ChEBI" id="CHEBI:30013"/>
        <dbReference type="ChEBI" id="CHEBI:30616"/>
        <dbReference type="ChEBI" id="CHEBI:61977"/>
        <dbReference type="ChEBI" id="CHEBI:456216"/>
        <dbReference type="EC" id="2.7.11.1"/>
    </reaction>
</comment>
<comment type="catalytic activity">
    <reaction>
        <text>L-seryl-[tau protein] + ATP = O-phospho-L-seryl-[tau protein] + ADP + H(+)</text>
        <dbReference type="Rhea" id="RHEA:12801"/>
        <dbReference type="Rhea" id="RHEA-COMP:13701"/>
        <dbReference type="Rhea" id="RHEA-COMP:13702"/>
        <dbReference type="ChEBI" id="CHEBI:15378"/>
        <dbReference type="ChEBI" id="CHEBI:29999"/>
        <dbReference type="ChEBI" id="CHEBI:30616"/>
        <dbReference type="ChEBI" id="CHEBI:83421"/>
        <dbReference type="ChEBI" id="CHEBI:456216"/>
        <dbReference type="EC" id="2.7.11.26"/>
    </reaction>
</comment>
<comment type="catalytic activity">
    <reaction>
        <text>L-threonyl-[tau protein] + ATP = O-phospho-L-threonyl-[tau protein] + ADP + H(+)</text>
        <dbReference type="Rhea" id="RHEA:53904"/>
        <dbReference type="Rhea" id="RHEA-COMP:13703"/>
        <dbReference type="Rhea" id="RHEA-COMP:13704"/>
        <dbReference type="ChEBI" id="CHEBI:15378"/>
        <dbReference type="ChEBI" id="CHEBI:30013"/>
        <dbReference type="ChEBI" id="CHEBI:30616"/>
        <dbReference type="ChEBI" id="CHEBI:61977"/>
        <dbReference type="ChEBI" id="CHEBI:456216"/>
        <dbReference type="EC" id="2.7.11.26"/>
    </reaction>
</comment>
<comment type="cofactor">
    <cofactor evidence="5">
        <name>Mg(2+)</name>
        <dbReference type="ChEBI" id="CHEBI:18420"/>
    </cofactor>
</comment>
<comment type="activity regulation">
    <text evidence="1">Inhibited by phosphorylation at Ser-219. Activated by phosphorylation on Thr-215 (By similarity).</text>
</comment>
<comment type="subunit">
    <text evidence="4">Interacts with MAPT/TAU.</text>
</comment>
<comment type="subcellular location">
    <subcellularLocation>
        <location evidence="1">Cell membrane</location>
        <topology evidence="1">Peripheral membrane protein</topology>
    </subcellularLocation>
    <subcellularLocation>
        <location evidence="1">Cytoplasm</location>
        <location evidence="1">Cytoskeleton</location>
    </subcellularLocation>
    <subcellularLocation>
        <location evidence="4">Cytoplasm</location>
    </subcellularLocation>
    <subcellularLocation>
        <location evidence="4">Cell projection</location>
        <location evidence="4">Dendrite</location>
    </subcellularLocation>
    <text evidence="1">Appears to localize to an intracellular network.</text>
</comment>
<comment type="domain">
    <text evidence="1">The UBA domain does not seem to bind ubiquitin and ubiquitin-like and might play a role in regulating the enzyme conformation and localization. Activation of the kinase activity following phosphorylation at Thr-208 is accompanied by a conformational change that alters the orientation of the UBA domain with respect to the catalytic domain (By similarity).</text>
</comment>
<comment type="domain">
    <text evidence="1">The KA1 domain mediates binding to phospholipids and targeting to membranes. Binds phosphatidic acid (PA), phosphatidylserine (PtdSer) and phosphatidylinositol 4,5-bisphosphate (PtdIns(4,5)P2) (By similarity).</text>
</comment>
<comment type="PTM">
    <text evidence="1">Phosphorylated at Thr-215 by STK11/LKB1 in complex with STE20-related adapter-alpha (STRADA) pseudo kinase and CAB39. Phosphorylation at Thr-215 by TAOK1 activates the kinase activity, leading to phosphorylation and detachment of MAPT/TAU from microtubules. Phosphorylation at Ser-219 by GSK3-beta (GSK3B) inhibits the kinase activity. Phosphorylation at Thr-613 by PRKCZ/aPKC in polarized epithelial cells inhibits the kinase activity (By similarity).</text>
</comment>
<comment type="similarity">
    <text evidence="11">Belongs to the protein kinase superfamily. CAMK Ser/Thr protein kinase family. SNF1 subfamily.</text>
</comment>
<protein>
    <recommendedName>
        <fullName>Serine/threonine-protein kinase MARK1</fullName>
        <ecNumber>2.7.11.1</ecNumber>
        <ecNumber>2.7.11.26</ecNumber>
    </recommendedName>
    <alternativeName>
        <fullName>ELKL motif serine/threonine-protein kinase 3</fullName>
    </alternativeName>
    <alternativeName>
        <fullName>MAP/microtubule affinity-regulating kinase 1</fullName>
    </alternativeName>
    <alternativeName>
        <fullName>PAR1 homolog c</fullName>
        <shortName>Par-1c</shortName>
        <shortName>mPar-1c</shortName>
    </alternativeName>
</protein>
<reference evidence="11 12" key="1">
    <citation type="submission" date="2001-11" db="EMBL/GenBank/DDBJ databases">
        <title>Mus musculus Emk3/Mark1 mRNA.</title>
        <authorList>
            <person name="Darmon Y.M."/>
            <person name="Le Morvan V."/>
        </authorList>
    </citation>
    <scope>NUCLEOTIDE SEQUENCE [MRNA]</scope>
    <source>
        <strain>C57BL/6J</strain>
    </source>
</reference>
<reference key="2">
    <citation type="journal article" date="2009" name="PLoS Biol.">
        <title>Lineage-specific biology revealed by a finished genome assembly of the mouse.</title>
        <authorList>
            <person name="Church D.M."/>
            <person name="Goodstadt L."/>
            <person name="Hillier L.W."/>
            <person name="Zody M.C."/>
            <person name="Goldstein S."/>
            <person name="She X."/>
            <person name="Bult C.J."/>
            <person name="Agarwala R."/>
            <person name="Cherry J.L."/>
            <person name="DiCuccio M."/>
            <person name="Hlavina W."/>
            <person name="Kapustin Y."/>
            <person name="Meric P."/>
            <person name="Maglott D."/>
            <person name="Birtle Z."/>
            <person name="Marques A.C."/>
            <person name="Graves T."/>
            <person name="Zhou S."/>
            <person name="Teague B."/>
            <person name="Potamousis K."/>
            <person name="Churas C."/>
            <person name="Place M."/>
            <person name="Herschleb J."/>
            <person name="Runnheim R."/>
            <person name="Forrest D."/>
            <person name="Amos-Landgraf J."/>
            <person name="Schwartz D.C."/>
            <person name="Cheng Z."/>
            <person name="Lindblad-Toh K."/>
            <person name="Eichler E.E."/>
            <person name="Ponting C.P."/>
        </authorList>
    </citation>
    <scope>NUCLEOTIDE SEQUENCE [LARGE SCALE GENOMIC DNA]</scope>
    <source>
        <strain>C57BL/6J</strain>
    </source>
</reference>
<reference key="3">
    <citation type="journal article" date="2004" name="DNA Res.">
        <title>Prediction of the coding sequences of mouse homologues of KIAA gene: IV. The complete nucleotide sequences of 500 mouse KIAA-homologous cDNAs identified by screening of terminal sequences of cDNA clones randomly sampled from size-fractionated libraries.</title>
        <authorList>
            <person name="Okazaki N."/>
            <person name="Kikuno R."/>
            <person name="Ohara R."/>
            <person name="Inamoto S."/>
            <person name="Koseki H."/>
            <person name="Hiraoka S."/>
            <person name="Saga Y."/>
            <person name="Seino S."/>
            <person name="Nishimura M."/>
            <person name="Kaisho T."/>
            <person name="Hoshino K."/>
            <person name="Kitamura H."/>
            <person name="Nagase T."/>
            <person name="Ohara O."/>
            <person name="Koga H."/>
        </authorList>
    </citation>
    <scope>NUCLEOTIDE SEQUENCE [LARGE SCALE MRNA] OF 26-795</scope>
    <source>
        <tissue>Fetal brain</tissue>
    </source>
</reference>
<reference key="4">
    <citation type="journal article" date="2006" name="Mol. Cell. Proteomics">
        <title>Comprehensive identification of phosphorylation sites in postsynaptic density preparations.</title>
        <authorList>
            <person name="Trinidad J.C."/>
            <person name="Specht C.G."/>
            <person name="Thalhammer A."/>
            <person name="Schoepfer R."/>
            <person name="Burlingame A.L."/>
        </authorList>
    </citation>
    <scope>PHOSPHORYLATION [LARGE SCALE ANALYSIS] AT SER-403 AND SER-666</scope>
    <scope>IDENTIFICATION BY MASS SPECTROMETRY [LARGE SCALE ANALYSIS]</scope>
    <source>
        <tissue>Brain</tissue>
    </source>
</reference>
<reference key="5">
    <citation type="journal article" date="2010" name="Cell">
        <title>A tissue-specific atlas of mouse protein phosphorylation and expression.</title>
        <authorList>
            <person name="Huttlin E.L."/>
            <person name="Jedrychowski M.P."/>
            <person name="Elias J.E."/>
            <person name="Goswami T."/>
            <person name="Rad R."/>
            <person name="Beausoleil S.A."/>
            <person name="Villen J."/>
            <person name="Haas W."/>
            <person name="Sowa M.E."/>
            <person name="Gygi S.P."/>
        </authorList>
    </citation>
    <scope>PHOSPHORYLATION [LARGE SCALE ANALYSIS] AT SER-382; SER-390; SER-393; SER-403; SER-423 AND SER-475</scope>
    <scope>IDENTIFICATION BY MASS SPECTROMETRY [LARGE SCALE ANALYSIS]</scope>
    <source>
        <tissue>Brain</tissue>
        <tissue>Heart</tissue>
        <tissue>Testis</tissue>
    </source>
</reference>
<sequence length="795" mass="88335">MSARTPLPTVNERDTENHTSVDGYTETHIPPAKSSSRQNLPRCRNSITSATDEQPHIGNYRLQKTIGKGNFAKVKLARHVLTGREVAVKIIDKTQLNPTSLQKLFREVRIMKILNHPNIVKLFEVIETEKTLYLVMEYASGGEVFDYLVAHGRMKEKEARAKFRQIVSAVQYCHQKCIVHRDLKAENLLLDADMNIKIADFGFSNEFTVGNKLDTFCGSPPYAAPELFQGKKYDGPEVDVWSLGVILYTLVSGSLPFDGQNLKELRERVLRGKYRIPFYMSTDCENLLKKLLVLNPIKRGSLEQIMKDRWMNVGHEEEELKPYSEPELDLSDAKRIDIMVTMGFARDEINDALVSQKYDEVMATYILLGRKPPEFEGGESLSSGSLCQRSRPSSDLNNSTLQSPAHLKVQRSISANQKQRRFSDHAGPSIPPAVSYTKRPQANSVESEQKEEWGKDTARRLGSTTVGSKSEVTASPLVGPDRKKSTASPSNNVYSGGSMARRNTYVCERSTDRYAALQNGRDSSLTEMSASSMSSAGSTVASAGPSARPRHQKSMSTSGHPIKVTLPTIKDGSEAYRPGAAQRVPAASPSAHSISASTPDRTRFPRGSSSRSTFHGEQLRERRSAAYNGPPASPSHETGAFAHARRGTSTGIISKITSKFVRRDPSEGEASGRADTARGSSGDPKERDKDEGKEAKPRSLRFTWSMKTTSSMDPNDMLREIRKVLDANTCDYEQKERFLLFCVHGDARQDSLVQWEMEVCKLPRLSLNGVRFKRISGTSIAFKNIASKIANELKL</sequence>
<gene>
    <name evidence="13" type="primary">Mark1</name>
    <name evidence="12" type="synonym">Emk3</name>
    <name type="synonym">Kiaa1477</name>
</gene>
<organism>
    <name type="scientific">Mus musculus</name>
    <name type="common">Mouse</name>
    <dbReference type="NCBI Taxonomy" id="10090"/>
    <lineage>
        <taxon>Eukaryota</taxon>
        <taxon>Metazoa</taxon>
        <taxon>Chordata</taxon>
        <taxon>Craniata</taxon>
        <taxon>Vertebrata</taxon>
        <taxon>Euteleostomi</taxon>
        <taxon>Mammalia</taxon>
        <taxon>Eutheria</taxon>
        <taxon>Euarchontoglires</taxon>
        <taxon>Glires</taxon>
        <taxon>Rodentia</taxon>
        <taxon>Myomorpha</taxon>
        <taxon>Muroidea</taxon>
        <taxon>Muridae</taxon>
        <taxon>Murinae</taxon>
        <taxon>Mus</taxon>
        <taxon>Mus</taxon>
    </lineage>
</organism>
<keyword id="KW-0067">ATP-binding</keyword>
<keyword id="KW-1003">Cell membrane</keyword>
<keyword id="KW-0966">Cell projection</keyword>
<keyword id="KW-0963">Cytoplasm</keyword>
<keyword id="KW-0206">Cytoskeleton</keyword>
<keyword id="KW-0418">Kinase</keyword>
<keyword id="KW-0446">Lipid-binding</keyword>
<keyword id="KW-0460">Magnesium</keyword>
<keyword id="KW-0472">Membrane</keyword>
<keyword id="KW-0479">Metal-binding</keyword>
<keyword id="KW-0547">Nucleotide-binding</keyword>
<keyword id="KW-0597">Phosphoprotein</keyword>
<keyword id="KW-1185">Reference proteome</keyword>
<keyword id="KW-0723">Serine/threonine-protein kinase</keyword>
<keyword id="KW-0808">Transferase</keyword>
<keyword id="KW-0879">Wnt signaling pathway</keyword>
<name>MARK1_MOUSE</name>
<evidence type="ECO:0000250" key="1"/>
<evidence type="ECO:0000250" key="2">
    <source>
        <dbReference type="UniProtKB" id="O08678"/>
    </source>
</evidence>
<evidence type="ECO:0000250" key="3">
    <source>
        <dbReference type="UniProtKB" id="Q9H0K1"/>
    </source>
</evidence>
<evidence type="ECO:0000250" key="4">
    <source>
        <dbReference type="UniProtKB" id="Q9P0L2"/>
    </source>
</evidence>
<evidence type="ECO:0000250" key="5">
    <source>
        <dbReference type="UniProtKB" id="Q9POL2"/>
    </source>
</evidence>
<evidence type="ECO:0000255" key="6">
    <source>
        <dbReference type="PROSITE-ProRule" id="PRU00159"/>
    </source>
</evidence>
<evidence type="ECO:0000255" key="7">
    <source>
        <dbReference type="PROSITE-ProRule" id="PRU00212"/>
    </source>
</evidence>
<evidence type="ECO:0000255" key="8">
    <source>
        <dbReference type="PROSITE-ProRule" id="PRU00565"/>
    </source>
</evidence>
<evidence type="ECO:0000255" key="9">
    <source>
        <dbReference type="PROSITE-ProRule" id="PRU10027"/>
    </source>
</evidence>
<evidence type="ECO:0000256" key="10">
    <source>
        <dbReference type="SAM" id="MobiDB-lite"/>
    </source>
</evidence>
<evidence type="ECO:0000305" key="11"/>
<evidence type="ECO:0000312" key="12">
    <source>
        <dbReference type="EMBL" id="AAL50826.1"/>
    </source>
</evidence>
<evidence type="ECO:0000312" key="13">
    <source>
        <dbReference type="MGI" id="MGI:2664902"/>
    </source>
</evidence>
<evidence type="ECO:0007744" key="14">
    <source>
    </source>
</evidence>
<evidence type="ECO:0007744" key="15">
    <source>
    </source>
</evidence>
<accession>Q8VHJ5</accession>
<accession>E9QL17</accession>
<accession>Q69ZI7</accession>
<proteinExistence type="evidence at protein level"/>
<dbReference type="EC" id="2.7.11.1"/>
<dbReference type="EC" id="2.7.11.26"/>
<dbReference type="EMBL" id="AF453686">
    <property type="protein sequence ID" value="AAL50826.1"/>
    <property type="molecule type" value="mRNA"/>
</dbReference>
<dbReference type="EMBL" id="AC117826">
    <property type="status" value="NOT_ANNOTATED_CDS"/>
    <property type="molecule type" value="Genomic_DNA"/>
</dbReference>
<dbReference type="EMBL" id="AC131992">
    <property type="status" value="NOT_ANNOTATED_CDS"/>
    <property type="molecule type" value="Genomic_DNA"/>
</dbReference>
<dbReference type="EMBL" id="AK173181">
    <property type="protein sequence ID" value="BAD32459.1"/>
    <property type="molecule type" value="mRNA"/>
</dbReference>
<dbReference type="CCDS" id="CCDS35817.1"/>
<dbReference type="RefSeq" id="NP_663490.2">
    <property type="nucleotide sequence ID" value="NM_145515.2"/>
</dbReference>
<dbReference type="SMR" id="Q8VHJ5"/>
<dbReference type="BioGRID" id="230554">
    <property type="interactions" value="12"/>
</dbReference>
<dbReference type="FunCoup" id="Q8VHJ5">
    <property type="interactions" value="1465"/>
</dbReference>
<dbReference type="IntAct" id="Q8VHJ5">
    <property type="interactions" value="3"/>
</dbReference>
<dbReference type="MINT" id="Q8VHJ5"/>
<dbReference type="STRING" id="10090.ENSMUSP00000027929"/>
<dbReference type="GlyGen" id="Q8VHJ5">
    <property type="glycosylation" value="2 sites, 1 O-linked glycan (2 sites)"/>
</dbReference>
<dbReference type="iPTMnet" id="Q8VHJ5"/>
<dbReference type="PhosphoSitePlus" id="Q8VHJ5"/>
<dbReference type="jPOST" id="Q8VHJ5"/>
<dbReference type="PaxDb" id="10090-ENSMUSP00000027929"/>
<dbReference type="ProteomicsDB" id="292170"/>
<dbReference type="Pumba" id="Q8VHJ5"/>
<dbReference type="Antibodypedia" id="2072">
    <property type="antibodies" value="432 antibodies from 33 providers"/>
</dbReference>
<dbReference type="DNASU" id="226778"/>
<dbReference type="Ensembl" id="ENSMUST00000027929.10">
    <property type="protein sequence ID" value="ENSMUSP00000027929.5"/>
    <property type="gene ID" value="ENSMUSG00000026620.12"/>
</dbReference>
<dbReference type="GeneID" id="226778"/>
<dbReference type="KEGG" id="mmu:226778"/>
<dbReference type="UCSC" id="uc007dyt.2">
    <property type="organism name" value="mouse"/>
</dbReference>
<dbReference type="AGR" id="MGI:2664902"/>
<dbReference type="CTD" id="4139"/>
<dbReference type="MGI" id="MGI:2664902">
    <property type="gene designation" value="Mark1"/>
</dbReference>
<dbReference type="VEuPathDB" id="HostDB:ENSMUSG00000026620"/>
<dbReference type="eggNOG" id="KOG0586">
    <property type="taxonomic scope" value="Eukaryota"/>
</dbReference>
<dbReference type="GeneTree" id="ENSGT00940000157560"/>
<dbReference type="HOGENOM" id="CLU_000288_157_5_1"/>
<dbReference type="InParanoid" id="Q8VHJ5"/>
<dbReference type="OMA" id="AVEMIAC"/>
<dbReference type="OrthoDB" id="193931at2759"/>
<dbReference type="PhylomeDB" id="Q8VHJ5"/>
<dbReference type="TreeFam" id="TF315213"/>
<dbReference type="BioGRID-ORCS" id="226778">
    <property type="hits" value="2 hits in 81 CRISPR screens"/>
</dbReference>
<dbReference type="CD-CODE" id="CE726F99">
    <property type="entry name" value="Postsynaptic density"/>
</dbReference>
<dbReference type="PRO" id="PR:Q8VHJ5"/>
<dbReference type="Proteomes" id="UP000000589">
    <property type="component" value="Chromosome 1"/>
</dbReference>
<dbReference type="RNAct" id="Q8VHJ5">
    <property type="molecule type" value="protein"/>
</dbReference>
<dbReference type="Bgee" id="ENSMUSG00000026620">
    <property type="expression patterns" value="Expressed in trigeminal ganglion and 237 other cell types or tissues"/>
</dbReference>
<dbReference type="ExpressionAtlas" id="Q8VHJ5">
    <property type="expression patterns" value="baseline and differential"/>
</dbReference>
<dbReference type="GO" id="GO:0005737">
    <property type="term" value="C:cytoplasm"/>
    <property type="evidence" value="ECO:0000250"/>
    <property type="project" value="UniProtKB"/>
</dbReference>
<dbReference type="GO" id="GO:0005856">
    <property type="term" value="C:cytoskeleton"/>
    <property type="evidence" value="ECO:0007669"/>
    <property type="project" value="UniProtKB-SubCell"/>
</dbReference>
<dbReference type="GO" id="GO:0030425">
    <property type="term" value="C:dendrite"/>
    <property type="evidence" value="ECO:0000250"/>
    <property type="project" value="UniProtKB"/>
</dbReference>
<dbReference type="GO" id="GO:0098978">
    <property type="term" value="C:glutamatergic synapse"/>
    <property type="evidence" value="ECO:0000314"/>
    <property type="project" value="SynGO"/>
</dbReference>
<dbReference type="GO" id="GO:0005886">
    <property type="term" value="C:plasma membrane"/>
    <property type="evidence" value="ECO:0000250"/>
    <property type="project" value="UniProtKB"/>
</dbReference>
<dbReference type="GO" id="GO:0098794">
    <property type="term" value="C:postsynapse"/>
    <property type="evidence" value="ECO:0000314"/>
    <property type="project" value="SynGO"/>
</dbReference>
<dbReference type="GO" id="GO:0005524">
    <property type="term" value="F:ATP binding"/>
    <property type="evidence" value="ECO:0000250"/>
    <property type="project" value="UniProtKB"/>
</dbReference>
<dbReference type="GO" id="GO:0000287">
    <property type="term" value="F:magnesium ion binding"/>
    <property type="evidence" value="ECO:0000250"/>
    <property type="project" value="UniProtKB"/>
</dbReference>
<dbReference type="GO" id="GO:0070300">
    <property type="term" value="F:phosphatidic acid binding"/>
    <property type="evidence" value="ECO:0000250"/>
    <property type="project" value="UniProtKB"/>
</dbReference>
<dbReference type="GO" id="GO:0005546">
    <property type="term" value="F:phosphatidylinositol-4,5-bisphosphate binding"/>
    <property type="evidence" value="ECO:0000250"/>
    <property type="project" value="UniProtKB"/>
</dbReference>
<dbReference type="GO" id="GO:0001786">
    <property type="term" value="F:phosphatidylserine binding"/>
    <property type="evidence" value="ECO:0000250"/>
    <property type="project" value="UniProtKB"/>
</dbReference>
<dbReference type="GO" id="GO:0106310">
    <property type="term" value="F:protein serine kinase activity"/>
    <property type="evidence" value="ECO:0007669"/>
    <property type="project" value="RHEA"/>
</dbReference>
<dbReference type="GO" id="GO:0004674">
    <property type="term" value="F:protein serine/threonine kinase activity"/>
    <property type="evidence" value="ECO:0000250"/>
    <property type="project" value="UniProtKB"/>
</dbReference>
<dbReference type="GO" id="GO:0050321">
    <property type="term" value="F:tau-protein kinase activity"/>
    <property type="evidence" value="ECO:0000250"/>
    <property type="project" value="UniProtKB"/>
</dbReference>
<dbReference type="GO" id="GO:0051654">
    <property type="term" value="P:establishment of mitochondrion localization"/>
    <property type="evidence" value="ECO:0000315"/>
    <property type="project" value="ARUK-UCL"/>
</dbReference>
<dbReference type="GO" id="GO:0035556">
    <property type="term" value="P:intracellular signal transduction"/>
    <property type="evidence" value="ECO:0000250"/>
    <property type="project" value="UniProtKB"/>
</dbReference>
<dbReference type="GO" id="GO:0010719">
    <property type="term" value="P:negative regulation of epithelial to mesenchymal transition"/>
    <property type="evidence" value="ECO:0007669"/>
    <property type="project" value="Ensembl"/>
</dbReference>
<dbReference type="GO" id="GO:0010629">
    <property type="term" value="P:negative regulation of gene expression"/>
    <property type="evidence" value="ECO:0007669"/>
    <property type="project" value="Ensembl"/>
</dbReference>
<dbReference type="GO" id="GO:0001764">
    <property type="term" value="P:neuron migration"/>
    <property type="evidence" value="ECO:0000250"/>
    <property type="project" value="UniProtKB"/>
</dbReference>
<dbReference type="GO" id="GO:0010628">
    <property type="term" value="P:positive regulation of gene expression"/>
    <property type="evidence" value="ECO:0007669"/>
    <property type="project" value="Ensembl"/>
</dbReference>
<dbReference type="GO" id="GO:0006468">
    <property type="term" value="P:protein phosphorylation"/>
    <property type="evidence" value="ECO:0000250"/>
    <property type="project" value="UniProtKB"/>
</dbReference>
<dbReference type="GO" id="GO:0050773">
    <property type="term" value="P:regulation of dendrite development"/>
    <property type="evidence" value="ECO:0000315"/>
    <property type="project" value="ARUK-UCL"/>
</dbReference>
<dbReference type="GO" id="GO:0010975">
    <property type="term" value="P:regulation of neuron projection development"/>
    <property type="evidence" value="ECO:0000315"/>
    <property type="project" value="ARUK-UCL"/>
</dbReference>
<dbReference type="GO" id="GO:0150052">
    <property type="term" value="P:regulation of postsynapse assembly"/>
    <property type="evidence" value="ECO:0000314"/>
    <property type="project" value="SynGO"/>
</dbReference>
<dbReference type="GO" id="GO:0016055">
    <property type="term" value="P:Wnt signaling pathway"/>
    <property type="evidence" value="ECO:0007669"/>
    <property type="project" value="UniProtKB-KW"/>
</dbReference>
<dbReference type="CDD" id="cd12196">
    <property type="entry name" value="MARK1-3_C"/>
    <property type="match status" value="1"/>
</dbReference>
<dbReference type="CDD" id="cd14072">
    <property type="entry name" value="STKc_MARK"/>
    <property type="match status" value="1"/>
</dbReference>
<dbReference type="FunFam" id="1.10.510.10:FF:001032">
    <property type="entry name" value="KP78b, isoform A"/>
    <property type="match status" value="1"/>
</dbReference>
<dbReference type="FunFam" id="1.10.8.10:FF:000011">
    <property type="entry name" value="Non-specific serine/threonine protein kinase"/>
    <property type="match status" value="1"/>
</dbReference>
<dbReference type="FunFam" id="3.30.200.20:FF:000003">
    <property type="entry name" value="Non-specific serine/threonine protein kinase"/>
    <property type="match status" value="1"/>
</dbReference>
<dbReference type="FunFam" id="3.30.310.80:FF:000001">
    <property type="entry name" value="Non-specific serine/threonine protein kinase"/>
    <property type="match status" value="1"/>
</dbReference>
<dbReference type="Gene3D" id="1.10.8.10">
    <property type="entry name" value="DNA helicase RuvA subunit, C-terminal domain"/>
    <property type="match status" value="1"/>
</dbReference>
<dbReference type="Gene3D" id="3.30.310.80">
    <property type="entry name" value="Kinase associated domain 1, KA1"/>
    <property type="match status" value="1"/>
</dbReference>
<dbReference type="Gene3D" id="3.30.200.20">
    <property type="entry name" value="Phosphorylase Kinase, domain 1"/>
    <property type="match status" value="1"/>
</dbReference>
<dbReference type="Gene3D" id="1.10.510.10">
    <property type="entry name" value="Transferase(Phosphotransferase) domain 1"/>
    <property type="match status" value="1"/>
</dbReference>
<dbReference type="InterPro" id="IPR028375">
    <property type="entry name" value="KA1/Ssp2_C"/>
</dbReference>
<dbReference type="InterPro" id="IPR001772">
    <property type="entry name" value="KA1_dom"/>
</dbReference>
<dbReference type="InterPro" id="IPR011009">
    <property type="entry name" value="Kinase-like_dom_sf"/>
</dbReference>
<dbReference type="InterPro" id="IPR049508">
    <property type="entry name" value="MARK1-4_cat"/>
</dbReference>
<dbReference type="InterPro" id="IPR000719">
    <property type="entry name" value="Prot_kinase_dom"/>
</dbReference>
<dbReference type="InterPro" id="IPR017441">
    <property type="entry name" value="Protein_kinase_ATP_BS"/>
</dbReference>
<dbReference type="InterPro" id="IPR008271">
    <property type="entry name" value="Ser/Thr_kinase_AS"/>
</dbReference>
<dbReference type="InterPro" id="IPR015940">
    <property type="entry name" value="UBA"/>
</dbReference>
<dbReference type="PANTHER" id="PTHR24346">
    <property type="entry name" value="MAP/MICROTUBULE AFFINITY-REGULATING KINASE"/>
    <property type="match status" value="1"/>
</dbReference>
<dbReference type="PANTHER" id="PTHR24346:SF21">
    <property type="entry name" value="SERINE_THREONINE-PROTEIN KINASE MARK1"/>
    <property type="match status" value="1"/>
</dbReference>
<dbReference type="Pfam" id="PF02149">
    <property type="entry name" value="KA1"/>
    <property type="match status" value="1"/>
</dbReference>
<dbReference type="Pfam" id="PF00069">
    <property type="entry name" value="Pkinase"/>
    <property type="match status" value="1"/>
</dbReference>
<dbReference type="Pfam" id="PF00627">
    <property type="entry name" value="UBA"/>
    <property type="match status" value="1"/>
</dbReference>
<dbReference type="SMART" id="SM00220">
    <property type="entry name" value="S_TKc"/>
    <property type="match status" value="1"/>
</dbReference>
<dbReference type="SMART" id="SM00165">
    <property type="entry name" value="UBA"/>
    <property type="match status" value="1"/>
</dbReference>
<dbReference type="SUPFAM" id="SSF103243">
    <property type="entry name" value="KA1-like"/>
    <property type="match status" value="1"/>
</dbReference>
<dbReference type="SUPFAM" id="SSF56112">
    <property type="entry name" value="Protein kinase-like (PK-like)"/>
    <property type="match status" value="1"/>
</dbReference>
<dbReference type="PROSITE" id="PS50032">
    <property type="entry name" value="KA1"/>
    <property type="match status" value="1"/>
</dbReference>
<dbReference type="PROSITE" id="PS00107">
    <property type="entry name" value="PROTEIN_KINASE_ATP"/>
    <property type="match status" value="1"/>
</dbReference>
<dbReference type="PROSITE" id="PS50011">
    <property type="entry name" value="PROTEIN_KINASE_DOM"/>
    <property type="match status" value="1"/>
</dbReference>
<dbReference type="PROSITE" id="PS00108">
    <property type="entry name" value="PROTEIN_KINASE_ST"/>
    <property type="match status" value="1"/>
</dbReference>
<dbReference type="PROSITE" id="PS50030">
    <property type="entry name" value="UBA"/>
    <property type="match status" value="1"/>
</dbReference>